<protein>
    <recommendedName>
        <fullName>RCC1 and BTB domain-containing protein 2</fullName>
    </recommendedName>
    <alternativeName>
        <fullName>Regulator of chromosome condensation and BTB domain-containing protein 2</fullName>
    </alternativeName>
</protein>
<evidence type="ECO:0000250" key="1">
    <source>
        <dbReference type="UniProtKB" id="Q99LJ7"/>
    </source>
</evidence>
<evidence type="ECO:0000255" key="2"/>
<evidence type="ECO:0000255" key="3">
    <source>
        <dbReference type="PROSITE-ProRule" id="PRU00037"/>
    </source>
</evidence>
<evidence type="ECO:0000303" key="4">
    <source ref="1"/>
</evidence>
<evidence type="ECO:0000305" key="5"/>
<sequence length="551" mass="60315">MEEELPLFSGDSGKPVQATLSSLKMLDVGKWPIFSLCSEEELQLIRQACVFGSAGNEVLYTTVNDEIFVLGTNCCGCLGLGDVQSTIEPRRLDSLNGKKIACLSYGSGPHIVLATTEGEVFTWGHNAYSQLGNGTTNHGLVPCHISTNLSNKQVIEVACGSYHSLVLTSDGEVFAWGYNNSGQVGSGSTVNQPIPRRVTGCLQNKVVVTIACGQMCCMAVVDTGEVYVWGYNGNGQLGLGNSGNQPTPCRVAALQGIRVQRVACGYAHTLVLTDEGQVYAWGANSYGQLGTGNKSNQSYPTPVTVEKDRIIEIAACHSTHTSAAKTQGGHVYMWGQCRGQSVILPHLTHFSCTDDVFACFATPAVTWRLLSVEPDDHLTVAESLKREFDNPDTADLKFLVDGKYIYAHKVLLKIRCEHFRSSLEDNEDDIVEMSEFSYPVYRAFLEYLYTDSISLSPEEAVGLLDLATFYRENRLKKLCQQTIKQGICEENAIALLSAAVKYDAQDLEEFCFRFCINHLTVVTQTSGFAEMDHDLLKNFISKASRVGAFKN</sequence>
<comment type="subcellular location">
    <subcellularLocation>
        <location evidence="1">Cytoplasmic vesicle</location>
        <location evidence="1">Secretory vesicle</location>
        <location evidence="1">Acrosome</location>
    </subcellularLocation>
    <text evidence="1">Mainly found in the acrosomal cap region.</text>
</comment>
<comment type="alternative products">
    <event type="alternative splicing"/>
    <isoform>
        <id>Q5RCZ7-1</id>
        <name>1</name>
        <sequence type="displayed"/>
    </isoform>
    <isoform>
        <id>Q5RCZ7-2</id>
        <name>2</name>
        <sequence type="described" ref="VSP_016725"/>
    </isoform>
</comment>
<comment type="domain">
    <text evidence="1">The BTB domain might play a role in targeting to acrosomal vesicles.</text>
</comment>
<gene>
    <name type="primary">RCBTB2</name>
</gene>
<keyword id="KW-0025">Alternative splicing</keyword>
<keyword id="KW-0968">Cytoplasmic vesicle</keyword>
<keyword id="KW-1185">Reference proteome</keyword>
<keyword id="KW-0677">Repeat</keyword>
<dbReference type="EMBL" id="CR857643">
    <property type="protein sequence ID" value="CAH89917.1"/>
    <property type="molecule type" value="mRNA"/>
</dbReference>
<dbReference type="EMBL" id="CR858121">
    <property type="protein sequence ID" value="CAH90360.1"/>
    <property type="molecule type" value="mRNA"/>
</dbReference>
<dbReference type="EMBL" id="CR859763">
    <property type="protein sequence ID" value="CAH91921.1"/>
    <property type="molecule type" value="mRNA"/>
</dbReference>
<dbReference type="RefSeq" id="NP_001125174.1">
    <molecule id="Q5RCZ7-1"/>
    <property type="nucleotide sequence ID" value="NM_001131702.1"/>
</dbReference>
<dbReference type="RefSeq" id="NP_001128757.1">
    <property type="nucleotide sequence ID" value="NM_001135285.1"/>
</dbReference>
<dbReference type="RefSeq" id="XP_054384605.1">
    <molecule id="Q5RCZ7-2"/>
    <property type="nucleotide sequence ID" value="XM_054528630.2"/>
</dbReference>
<dbReference type="RefSeq" id="XP_054384607.1">
    <molecule id="Q5RCZ7-2"/>
    <property type="nucleotide sequence ID" value="XM_054528632.2"/>
</dbReference>
<dbReference type="RefSeq" id="XP_063570730.1">
    <molecule id="Q5RCZ7-1"/>
    <property type="nucleotide sequence ID" value="XM_063714660.1"/>
</dbReference>
<dbReference type="RefSeq" id="XP_063570731.1">
    <molecule id="Q5RCZ7-2"/>
    <property type="nucleotide sequence ID" value="XM_063714661.1"/>
</dbReference>
<dbReference type="SMR" id="Q5RCZ7"/>
<dbReference type="FunCoup" id="Q5RCZ7">
    <property type="interactions" value="1007"/>
</dbReference>
<dbReference type="STRING" id="9601.ENSPPYP00000006106"/>
<dbReference type="Ensembl" id="ENSPPYT00000006345.2">
    <molecule id="Q5RCZ7-1"/>
    <property type="protein sequence ID" value="ENSPPYP00000006106.1"/>
    <property type="gene ID" value="ENSPPYG00000005361.3"/>
</dbReference>
<dbReference type="GeneID" id="100172062"/>
<dbReference type="KEGG" id="pon:100172062"/>
<dbReference type="CTD" id="1102"/>
<dbReference type="eggNOG" id="KOG1426">
    <property type="taxonomic scope" value="Eukaryota"/>
</dbReference>
<dbReference type="GeneTree" id="ENSGT00940000158925"/>
<dbReference type="HOGENOM" id="CLU_029788_1_0_1"/>
<dbReference type="InParanoid" id="Q5RCZ7"/>
<dbReference type="OrthoDB" id="16281at2759"/>
<dbReference type="TreeFam" id="TF329478"/>
<dbReference type="Proteomes" id="UP000001595">
    <property type="component" value="Chromosome 13"/>
</dbReference>
<dbReference type="GO" id="GO:0001669">
    <property type="term" value="C:acrosomal vesicle"/>
    <property type="evidence" value="ECO:0007669"/>
    <property type="project" value="UniProtKB-SubCell"/>
</dbReference>
<dbReference type="CDD" id="cd18529">
    <property type="entry name" value="BACK_RCBTB2"/>
    <property type="match status" value="1"/>
</dbReference>
<dbReference type="CDD" id="cd18354">
    <property type="entry name" value="BTB_POZ_RCBTB2_CHC1L"/>
    <property type="match status" value="1"/>
</dbReference>
<dbReference type="FunFam" id="2.130.10.30:FF:000033">
    <property type="entry name" value="RCC1 and BTB domain-containing protein 2"/>
    <property type="match status" value="1"/>
</dbReference>
<dbReference type="FunFam" id="2.130.10.30:FF:000038">
    <property type="entry name" value="RCC1 and BTB domain-containing protein 2"/>
    <property type="match status" value="1"/>
</dbReference>
<dbReference type="FunFam" id="1.25.40.420:FF:000006">
    <property type="entry name" value="RCC1 and BTB domain-containing protein 2 isoform X1"/>
    <property type="match status" value="1"/>
</dbReference>
<dbReference type="FunFam" id="3.30.710.10:FF:000040">
    <property type="entry name" value="RCC1 and BTB domain-containing protein 2 isoform X1"/>
    <property type="match status" value="1"/>
</dbReference>
<dbReference type="Gene3D" id="1.25.40.420">
    <property type="match status" value="1"/>
</dbReference>
<dbReference type="Gene3D" id="3.30.710.10">
    <property type="entry name" value="Potassium Channel Kv1.1, Chain A"/>
    <property type="match status" value="1"/>
</dbReference>
<dbReference type="Gene3D" id="2.130.10.30">
    <property type="entry name" value="Regulator of chromosome condensation 1/beta-lactamase-inhibitor protein II"/>
    <property type="match status" value="2"/>
</dbReference>
<dbReference type="InterPro" id="IPR000210">
    <property type="entry name" value="BTB/POZ_dom"/>
</dbReference>
<dbReference type="InterPro" id="IPR009091">
    <property type="entry name" value="RCC1/BLIP-II"/>
</dbReference>
<dbReference type="InterPro" id="IPR000408">
    <property type="entry name" value="Reg_chr_condens"/>
</dbReference>
<dbReference type="InterPro" id="IPR051625">
    <property type="entry name" value="Signaling_Regulatory_Domain"/>
</dbReference>
<dbReference type="InterPro" id="IPR011333">
    <property type="entry name" value="SKP1/BTB/POZ_sf"/>
</dbReference>
<dbReference type="PANTHER" id="PTHR22872">
    <property type="entry name" value="BTK-BINDING PROTEIN-RELATED"/>
    <property type="match status" value="1"/>
</dbReference>
<dbReference type="PANTHER" id="PTHR22872:SF3">
    <property type="entry name" value="RCC1 AND BTB DOMAIN CONTAINING PROTEIN 2"/>
    <property type="match status" value="1"/>
</dbReference>
<dbReference type="Pfam" id="PF00651">
    <property type="entry name" value="BTB"/>
    <property type="match status" value="1"/>
</dbReference>
<dbReference type="Pfam" id="PF25390">
    <property type="entry name" value="WD40_RLD"/>
    <property type="match status" value="1"/>
</dbReference>
<dbReference type="PRINTS" id="PR00633">
    <property type="entry name" value="RCCNDNSATION"/>
</dbReference>
<dbReference type="SMART" id="SM00225">
    <property type="entry name" value="BTB"/>
    <property type="match status" value="1"/>
</dbReference>
<dbReference type="SUPFAM" id="SSF54695">
    <property type="entry name" value="POZ domain"/>
    <property type="match status" value="1"/>
</dbReference>
<dbReference type="SUPFAM" id="SSF50985">
    <property type="entry name" value="RCC1/BLIP-II"/>
    <property type="match status" value="1"/>
</dbReference>
<dbReference type="PROSITE" id="PS50097">
    <property type="entry name" value="BTB"/>
    <property type="match status" value="1"/>
</dbReference>
<dbReference type="PROSITE" id="PS00626">
    <property type="entry name" value="RCC1_2"/>
    <property type="match status" value="1"/>
</dbReference>
<dbReference type="PROSITE" id="PS50012">
    <property type="entry name" value="RCC1_3"/>
    <property type="match status" value="4"/>
</dbReference>
<name>RCBT2_PONAB</name>
<feature type="chain" id="PRO_0000206646" description="RCC1 and BTB domain-containing protein 2">
    <location>
        <begin position="1"/>
        <end position="551"/>
    </location>
</feature>
<feature type="repeat" description="RCC1 1" evidence="2">
    <location>
        <begin position="64"/>
        <end position="115"/>
    </location>
</feature>
<feature type="repeat" description="RCC1 2" evidence="2">
    <location>
        <begin position="117"/>
        <end position="169"/>
    </location>
</feature>
<feature type="repeat" description="RCC1 3" evidence="2">
    <location>
        <begin position="171"/>
        <end position="222"/>
    </location>
</feature>
<feature type="repeat" description="RCC1 4" evidence="2">
    <location>
        <begin position="223"/>
        <end position="274"/>
    </location>
</feature>
<feature type="repeat" description="RCC1 5" evidence="2">
    <location>
        <begin position="276"/>
        <end position="326"/>
    </location>
</feature>
<feature type="repeat" description="RCC1 6" evidence="2">
    <location>
        <begin position="328"/>
        <end position="382"/>
    </location>
</feature>
<feature type="domain" description="BTB" evidence="3">
    <location>
        <begin position="394"/>
        <end position="457"/>
    </location>
</feature>
<feature type="splice variant" id="VSP_016725" description="In isoform 2." evidence="4">
    <location>
        <begin position="1"/>
        <end position="24"/>
    </location>
</feature>
<feature type="sequence conflict" description="In Ref. 1; CAH91921." evidence="5" ref="1">
    <original>Q</original>
    <variation>R</variation>
    <location>
        <position position="84"/>
    </location>
</feature>
<feature type="sequence conflict" description="In Ref. 1; CAH89917." evidence="5" ref="1">
    <original>E</original>
    <variation>G</variation>
    <location>
        <position position="417"/>
    </location>
</feature>
<proteinExistence type="evidence at transcript level"/>
<reference key="1">
    <citation type="submission" date="2004-11" db="EMBL/GenBank/DDBJ databases">
        <authorList>
            <consortium name="The German cDNA consortium"/>
        </authorList>
    </citation>
    <scope>NUCLEOTIDE SEQUENCE [LARGE SCALE MRNA] (ISOFORMS 1 AND 2)</scope>
    <source>
        <tissue>Heart</tissue>
        <tissue>Kidney</tissue>
    </source>
</reference>
<accession>Q5RCZ7</accession>
<accession>Q5R8I9</accession>
<accession>Q5RE90</accession>
<organism>
    <name type="scientific">Pongo abelii</name>
    <name type="common">Sumatran orangutan</name>
    <name type="synonym">Pongo pygmaeus abelii</name>
    <dbReference type="NCBI Taxonomy" id="9601"/>
    <lineage>
        <taxon>Eukaryota</taxon>
        <taxon>Metazoa</taxon>
        <taxon>Chordata</taxon>
        <taxon>Craniata</taxon>
        <taxon>Vertebrata</taxon>
        <taxon>Euteleostomi</taxon>
        <taxon>Mammalia</taxon>
        <taxon>Eutheria</taxon>
        <taxon>Euarchontoglires</taxon>
        <taxon>Primates</taxon>
        <taxon>Haplorrhini</taxon>
        <taxon>Catarrhini</taxon>
        <taxon>Hominidae</taxon>
        <taxon>Pongo</taxon>
    </lineage>
</organism>